<dbReference type="EMBL" id="L42023">
    <property type="protein sequence ID" value="AAC22249.1"/>
    <property type="molecule type" value="Genomic_DNA"/>
</dbReference>
<dbReference type="PIR" id="I64009">
    <property type="entry name" value="I64009"/>
</dbReference>
<dbReference type="STRING" id="71421.HI_0585"/>
<dbReference type="TCDB" id="2.A.61.1.3">
    <property type="family name" value="the c4-dicarboxylate uptake c (dcuc) family"/>
</dbReference>
<dbReference type="EnsemblBacteria" id="AAC22249">
    <property type="protein sequence ID" value="AAC22249"/>
    <property type="gene ID" value="HI_0585"/>
</dbReference>
<dbReference type="KEGG" id="hin:HI_0585"/>
<dbReference type="eggNOG" id="COG3069">
    <property type="taxonomic scope" value="Bacteria"/>
</dbReference>
<dbReference type="HOGENOM" id="CLU_030262_1_0_6"/>
<dbReference type="PhylomeDB" id="P44018"/>
<dbReference type="Proteomes" id="UP000000579">
    <property type="component" value="Chromosome"/>
</dbReference>
<dbReference type="GO" id="GO:0005886">
    <property type="term" value="C:plasma membrane"/>
    <property type="evidence" value="ECO:0007669"/>
    <property type="project" value="UniProtKB-SubCell"/>
</dbReference>
<dbReference type="GO" id="GO:0015556">
    <property type="term" value="F:C4-dicarboxylate transmembrane transporter activity"/>
    <property type="evidence" value="ECO:0007669"/>
    <property type="project" value="InterPro"/>
</dbReference>
<dbReference type="GO" id="GO:0015740">
    <property type="term" value="P:C4-dicarboxylate transport"/>
    <property type="evidence" value="ECO:0000318"/>
    <property type="project" value="GO_Central"/>
</dbReference>
<dbReference type="InterPro" id="IPR004669">
    <property type="entry name" value="C4_dicarb_anaerob_car"/>
</dbReference>
<dbReference type="InterPro" id="IPR018385">
    <property type="entry name" value="C4_dicarb_anaerob_car-like"/>
</dbReference>
<dbReference type="NCBIfam" id="TIGR00771">
    <property type="entry name" value="DcuC"/>
    <property type="match status" value="1"/>
</dbReference>
<dbReference type="NCBIfam" id="NF037994">
    <property type="entry name" value="DcuC_1"/>
    <property type="match status" value="1"/>
</dbReference>
<dbReference type="PANTHER" id="PTHR42002">
    <property type="entry name" value="ANAEROBIC C4-DICARBOXYLATE TRANSPORTER DCUC-RELATED"/>
    <property type="match status" value="1"/>
</dbReference>
<dbReference type="PANTHER" id="PTHR42002:SF2">
    <property type="entry name" value="ANAEROBIC C4-DICARBOXYLATE TRANSPORTER DCUC-RELATED"/>
    <property type="match status" value="1"/>
</dbReference>
<dbReference type="Pfam" id="PF03606">
    <property type="entry name" value="DcuC"/>
    <property type="match status" value="1"/>
</dbReference>
<proteinExistence type="uncertain"/>
<gene>
    <name type="ordered locus">HI_0585</name>
</gene>
<sequence>MMSPGSSHSAMISEMSGLTITQVNLSHAPYNMIAGAIGAVVLTILALVFKDYGEQHRQAYLAEQKESEIKVIEGVNVLYALAPLIPLVILVIGGTSLQQVPGLEWTKMGVPQAMLIGAIYGIIVTRISPVKITEEFFNGMGNSYANVLGIIIAASVFVAGLKSTGAVDAAISFLKESNEFVRWGATIGPFLMGLITGSGDAAAIAFNTAVTPHAVELGYTHVNLGMAAAIAGAIGRTASPIAGVTIVCAGLAMVSPVEMVKRTAPGMILAVLFLALFML</sequence>
<feature type="chain" id="PRO_0000201633" description="Putative uncharacterized transporter HI_0585">
    <location>
        <begin position="1"/>
        <end position="279"/>
    </location>
</feature>
<feature type="transmembrane region" description="Helical" evidence="1">
    <location>
        <begin position="29"/>
        <end position="49"/>
    </location>
</feature>
<feature type="transmembrane region" description="Helical" evidence="1">
    <location>
        <begin position="77"/>
        <end position="97"/>
    </location>
</feature>
<feature type="transmembrane region" description="Helical" evidence="1">
    <location>
        <begin position="105"/>
        <end position="125"/>
    </location>
</feature>
<feature type="transmembrane region" description="Helical" evidence="1">
    <location>
        <begin position="147"/>
        <end position="167"/>
    </location>
</feature>
<feature type="transmembrane region" description="Helical" evidence="1">
    <location>
        <begin position="186"/>
        <end position="206"/>
    </location>
</feature>
<feature type="transmembrane region" description="Helical" evidence="1">
    <location>
        <begin position="240"/>
        <end position="260"/>
    </location>
</feature>
<comment type="subcellular location">
    <subcellularLocation>
        <location evidence="2">Cell membrane</location>
        <topology evidence="2">Multi-pass membrane protein</topology>
    </subcellularLocation>
</comment>
<comment type="similarity">
    <text evidence="2">Belongs to the DcuC/DcuD transporter (TC 2.A.61) family.</text>
</comment>
<comment type="caution">
    <text evidence="2">Could be the product of a pseudogene.</text>
</comment>
<protein>
    <recommendedName>
        <fullName>Putative uncharacterized transporter HI_0585</fullName>
    </recommendedName>
</protein>
<name>Y585_HAEIN</name>
<evidence type="ECO:0000255" key="1"/>
<evidence type="ECO:0000305" key="2"/>
<accession>P44018</accession>
<keyword id="KW-1003">Cell membrane</keyword>
<keyword id="KW-0472">Membrane</keyword>
<keyword id="KW-1185">Reference proteome</keyword>
<keyword id="KW-0812">Transmembrane</keyword>
<keyword id="KW-1133">Transmembrane helix</keyword>
<keyword id="KW-0813">Transport</keyword>
<organism>
    <name type="scientific">Haemophilus influenzae (strain ATCC 51907 / DSM 11121 / KW20 / Rd)</name>
    <dbReference type="NCBI Taxonomy" id="71421"/>
    <lineage>
        <taxon>Bacteria</taxon>
        <taxon>Pseudomonadati</taxon>
        <taxon>Pseudomonadota</taxon>
        <taxon>Gammaproteobacteria</taxon>
        <taxon>Pasteurellales</taxon>
        <taxon>Pasteurellaceae</taxon>
        <taxon>Haemophilus</taxon>
    </lineage>
</organism>
<reference key="1">
    <citation type="journal article" date="1995" name="Science">
        <title>Whole-genome random sequencing and assembly of Haemophilus influenzae Rd.</title>
        <authorList>
            <person name="Fleischmann R.D."/>
            <person name="Adams M.D."/>
            <person name="White O."/>
            <person name="Clayton R.A."/>
            <person name="Kirkness E.F."/>
            <person name="Kerlavage A.R."/>
            <person name="Bult C.J."/>
            <person name="Tomb J.-F."/>
            <person name="Dougherty B.A."/>
            <person name="Merrick J.M."/>
            <person name="McKenney K."/>
            <person name="Sutton G.G."/>
            <person name="FitzHugh W."/>
            <person name="Fields C.A."/>
            <person name="Gocayne J.D."/>
            <person name="Scott J.D."/>
            <person name="Shirley R."/>
            <person name="Liu L.-I."/>
            <person name="Glodek A."/>
            <person name="Kelley J.M."/>
            <person name="Weidman J.F."/>
            <person name="Phillips C.A."/>
            <person name="Spriggs T."/>
            <person name="Hedblom E."/>
            <person name="Cotton M.D."/>
            <person name="Utterback T.R."/>
            <person name="Hanna M.C."/>
            <person name="Nguyen D.T."/>
            <person name="Saudek D.M."/>
            <person name="Brandon R.C."/>
            <person name="Fine L.D."/>
            <person name="Fritchman J.L."/>
            <person name="Fuhrmann J.L."/>
            <person name="Geoghagen N.S.M."/>
            <person name="Gnehm C.L."/>
            <person name="McDonald L.A."/>
            <person name="Small K.V."/>
            <person name="Fraser C.M."/>
            <person name="Smith H.O."/>
            <person name="Venter J.C."/>
        </authorList>
    </citation>
    <scope>NUCLEOTIDE SEQUENCE [LARGE SCALE GENOMIC DNA]</scope>
    <source>
        <strain>ATCC 51907 / DSM 11121 / KW20 / Rd</strain>
    </source>
</reference>